<organism>
    <name type="scientific">Caulobacter vibrioides (strain NA1000 / CB15N)</name>
    <name type="common">Caulobacter crescentus</name>
    <dbReference type="NCBI Taxonomy" id="565050"/>
    <lineage>
        <taxon>Bacteria</taxon>
        <taxon>Pseudomonadati</taxon>
        <taxon>Pseudomonadota</taxon>
        <taxon>Alphaproteobacteria</taxon>
        <taxon>Caulobacterales</taxon>
        <taxon>Caulobacteraceae</taxon>
        <taxon>Caulobacter</taxon>
    </lineage>
</organism>
<reference key="1">
    <citation type="journal article" date="2010" name="J. Bacteriol.">
        <title>The genetic basis of laboratory adaptation in Caulobacter crescentus.</title>
        <authorList>
            <person name="Marks M.E."/>
            <person name="Castro-Rojas C.M."/>
            <person name="Teiling C."/>
            <person name="Du L."/>
            <person name="Kapatral V."/>
            <person name="Walunas T.L."/>
            <person name="Crosson S."/>
        </authorList>
    </citation>
    <scope>NUCLEOTIDE SEQUENCE [LARGE SCALE GENOMIC DNA]</scope>
    <source>
        <strain>NA1000 / CB15N</strain>
    </source>
</reference>
<accession>B8GVW2</accession>
<protein>
    <recommendedName>
        <fullName evidence="1">Diaminopimelate epimerase</fullName>
        <shortName evidence="1">DAP epimerase</shortName>
        <ecNumber evidence="1">5.1.1.7</ecNumber>
    </recommendedName>
    <alternativeName>
        <fullName evidence="1">PLP-independent amino acid racemase</fullName>
    </alternativeName>
</protein>
<comment type="function">
    <text evidence="1">Catalyzes the stereoinversion of LL-2,6-diaminopimelate (L,L-DAP) to meso-diaminopimelate (meso-DAP), a precursor of L-lysine and an essential component of the bacterial peptidoglycan.</text>
</comment>
<comment type="catalytic activity">
    <reaction evidence="1">
        <text>(2S,6S)-2,6-diaminopimelate = meso-2,6-diaminopimelate</text>
        <dbReference type="Rhea" id="RHEA:15393"/>
        <dbReference type="ChEBI" id="CHEBI:57609"/>
        <dbReference type="ChEBI" id="CHEBI:57791"/>
        <dbReference type="EC" id="5.1.1.7"/>
    </reaction>
</comment>
<comment type="pathway">
    <text evidence="1">Amino-acid biosynthesis; L-lysine biosynthesis via DAP pathway; DL-2,6-diaminopimelate from LL-2,6-diaminopimelate: step 1/1.</text>
</comment>
<comment type="subunit">
    <text evidence="1">Homodimer.</text>
</comment>
<comment type="subcellular location">
    <subcellularLocation>
        <location evidence="1">Cytoplasm</location>
    </subcellularLocation>
</comment>
<comment type="similarity">
    <text evidence="1">Belongs to the diaminopimelate epimerase family.</text>
</comment>
<feature type="chain" id="PRO_1000124406" description="Diaminopimelate epimerase">
    <location>
        <begin position="1"/>
        <end position="288"/>
    </location>
</feature>
<feature type="active site" description="Proton donor" evidence="1">
    <location>
        <position position="80"/>
    </location>
</feature>
<feature type="active site" description="Proton acceptor" evidence="1">
    <location>
        <position position="227"/>
    </location>
</feature>
<feature type="binding site" evidence="1">
    <location>
        <position position="13"/>
    </location>
    <ligand>
        <name>substrate</name>
    </ligand>
</feature>
<feature type="binding site" evidence="1">
    <location>
        <position position="51"/>
    </location>
    <ligand>
        <name>substrate</name>
    </ligand>
</feature>
<feature type="binding site" evidence="1">
    <location>
        <position position="71"/>
    </location>
    <ligand>
        <name>substrate</name>
    </ligand>
</feature>
<feature type="binding site" evidence="1">
    <location>
        <begin position="81"/>
        <end position="82"/>
    </location>
    <ligand>
        <name>substrate</name>
    </ligand>
</feature>
<feature type="binding site" evidence="1">
    <location>
        <position position="166"/>
    </location>
    <ligand>
        <name>substrate</name>
    </ligand>
</feature>
<feature type="binding site" evidence="1">
    <location>
        <position position="200"/>
    </location>
    <ligand>
        <name>substrate</name>
    </ligand>
</feature>
<feature type="binding site" evidence="1">
    <location>
        <begin position="218"/>
        <end position="219"/>
    </location>
    <ligand>
        <name>substrate</name>
    </ligand>
</feature>
<feature type="binding site" evidence="1">
    <location>
        <begin position="228"/>
        <end position="229"/>
    </location>
    <ligand>
        <name>substrate</name>
    </ligand>
</feature>
<feature type="site" description="Could be important to modulate the pK values of the two catalytic cysteine residues" evidence="1">
    <location>
        <position position="168"/>
    </location>
</feature>
<feature type="site" description="Could be important to modulate the pK values of the two catalytic cysteine residues" evidence="1">
    <location>
        <position position="218"/>
    </location>
</feature>
<dbReference type="EC" id="5.1.1.7" evidence="1"/>
<dbReference type="EMBL" id="CP001340">
    <property type="protein sequence ID" value="ACL97265.1"/>
    <property type="molecule type" value="Genomic_DNA"/>
</dbReference>
<dbReference type="RefSeq" id="WP_010921513.1">
    <property type="nucleotide sequence ID" value="NC_011916.1"/>
</dbReference>
<dbReference type="RefSeq" id="YP_002519173.1">
    <property type="nucleotide sequence ID" value="NC_011916.1"/>
</dbReference>
<dbReference type="SMR" id="B8GVW2"/>
<dbReference type="GeneID" id="7331998"/>
<dbReference type="KEGG" id="ccs:CCNA_03800"/>
<dbReference type="PATRIC" id="fig|565050.3.peg.3704"/>
<dbReference type="HOGENOM" id="CLU_053306_1_0_5"/>
<dbReference type="OrthoDB" id="9805408at2"/>
<dbReference type="PhylomeDB" id="B8GVW2"/>
<dbReference type="UniPathway" id="UPA00034">
    <property type="reaction ID" value="UER00025"/>
</dbReference>
<dbReference type="Proteomes" id="UP000001364">
    <property type="component" value="Chromosome"/>
</dbReference>
<dbReference type="GO" id="GO:0005829">
    <property type="term" value="C:cytosol"/>
    <property type="evidence" value="ECO:0007669"/>
    <property type="project" value="TreeGrafter"/>
</dbReference>
<dbReference type="GO" id="GO:0008837">
    <property type="term" value="F:diaminopimelate epimerase activity"/>
    <property type="evidence" value="ECO:0007669"/>
    <property type="project" value="UniProtKB-UniRule"/>
</dbReference>
<dbReference type="GO" id="GO:0009089">
    <property type="term" value="P:lysine biosynthetic process via diaminopimelate"/>
    <property type="evidence" value="ECO:0007669"/>
    <property type="project" value="UniProtKB-UniRule"/>
</dbReference>
<dbReference type="Gene3D" id="3.10.310.10">
    <property type="entry name" value="Diaminopimelate Epimerase, Chain A, domain 1"/>
    <property type="match status" value="2"/>
</dbReference>
<dbReference type="HAMAP" id="MF_00197">
    <property type="entry name" value="DAP_epimerase"/>
    <property type="match status" value="1"/>
</dbReference>
<dbReference type="InterPro" id="IPR018510">
    <property type="entry name" value="DAP_epimerase_AS"/>
</dbReference>
<dbReference type="InterPro" id="IPR001653">
    <property type="entry name" value="DAP_epimerase_DapF"/>
</dbReference>
<dbReference type="NCBIfam" id="TIGR00652">
    <property type="entry name" value="DapF"/>
    <property type="match status" value="1"/>
</dbReference>
<dbReference type="PANTHER" id="PTHR31689:SF0">
    <property type="entry name" value="DIAMINOPIMELATE EPIMERASE"/>
    <property type="match status" value="1"/>
</dbReference>
<dbReference type="PANTHER" id="PTHR31689">
    <property type="entry name" value="DIAMINOPIMELATE EPIMERASE, CHLOROPLASTIC"/>
    <property type="match status" value="1"/>
</dbReference>
<dbReference type="Pfam" id="PF01678">
    <property type="entry name" value="DAP_epimerase"/>
    <property type="match status" value="2"/>
</dbReference>
<dbReference type="SUPFAM" id="SSF54506">
    <property type="entry name" value="Diaminopimelate epimerase-like"/>
    <property type="match status" value="2"/>
</dbReference>
<dbReference type="PROSITE" id="PS01326">
    <property type="entry name" value="DAP_EPIMERASE"/>
    <property type="match status" value="1"/>
</dbReference>
<keyword id="KW-0028">Amino-acid biosynthesis</keyword>
<keyword id="KW-0963">Cytoplasm</keyword>
<keyword id="KW-0413">Isomerase</keyword>
<keyword id="KW-0457">Lysine biosynthesis</keyword>
<keyword id="KW-1185">Reference proteome</keyword>
<gene>
    <name evidence="1" type="primary">dapF</name>
    <name type="ordered locus">CCNA_03800</name>
</gene>
<name>DAPF_CAUVN</name>
<evidence type="ECO:0000255" key="1">
    <source>
        <dbReference type="HAMAP-Rule" id="MF_00197"/>
    </source>
</evidence>
<proteinExistence type="inferred from homology"/>
<sequence length="288" mass="30546">MSRTFLKMNGLGNDFVVIQTLTEAFDPTPEQIRAIAKRPGVDGKGGIGCDQVIAIDPPRAEGASAYVRFWNSDGEVAGACGNGTRCVAWLLMQSAGKDAVAFDTVAGRLSGVAAGDKLVTVDMGPPGLDWTQIPLAEEMNTERVELQVGPIDAPLVHTPVCVSMGNPHVVFFVDAPVTDDFARGTGSLVEHHPLFPEGVNVGFAHIASRDHIRLKVWERGAGLTQACGTGACAAQVAAVRRGLTDRKARVEFDTGSLTIEWRESDGHVIMTGPITMEYAGKLPELVAA</sequence>